<protein>
    <recommendedName>
        <fullName evidence="1">Hydroxylamine reductase</fullName>
        <ecNumber evidence="1">1.7.99.1</ecNumber>
    </recommendedName>
    <alternativeName>
        <fullName evidence="1">Hybrid-cluster protein</fullName>
        <shortName evidence="1">HCP</shortName>
    </alternativeName>
    <alternativeName>
        <fullName evidence="1">Prismane protein</fullName>
    </alternativeName>
</protein>
<organism>
    <name type="scientific">Photobacterium phosphoreum</name>
    <dbReference type="NCBI Taxonomy" id="659"/>
    <lineage>
        <taxon>Bacteria</taxon>
        <taxon>Pseudomonadati</taxon>
        <taxon>Pseudomonadota</taxon>
        <taxon>Gammaproteobacteria</taxon>
        <taxon>Vibrionales</taxon>
        <taxon>Vibrionaceae</taxon>
        <taxon>Photobacterium</taxon>
    </lineage>
</organism>
<accession>Q8G969</accession>
<comment type="function">
    <text evidence="1">Catalyzes the reduction of hydroxylamine to form NH(3) and H(2)O.</text>
</comment>
<comment type="catalytic activity">
    <reaction evidence="1">
        <text>A + NH4(+) + H2O = hydroxylamine + AH2 + H(+)</text>
        <dbReference type="Rhea" id="RHEA:22052"/>
        <dbReference type="ChEBI" id="CHEBI:13193"/>
        <dbReference type="ChEBI" id="CHEBI:15377"/>
        <dbReference type="ChEBI" id="CHEBI:15378"/>
        <dbReference type="ChEBI" id="CHEBI:15429"/>
        <dbReference type="ChEBI" id="CHEBI:17499"/>
        <dbReference type="ChEBI" id="CHEBI:28938"/>
        <dbReference type="EC" id="1.7.99.1"/>
    </reaction>
</comment>
<comment type="cofactor">
    <cofactor evidence="1">
        <name>[2Fe-2S] cluster</name>
        <dbReference type="ChEBI" id="CHEBI:190135"/>
    </cofactor>
    <text evidence="1">Binds 1 [2Fe-2S] cluster.</text>
</comment>
<comment type="cofactor">
    <cofactor evidence="1">
        <name>hybrid [4Fe-2O-2S] cluster</name>
        <dbReference type="ChEBI" id="CHEBI:60519"/>
    </cofactor>
    <text evidence="1">Binds 1 hybrid [4Fe-2O-2S] cluster.</text>
</comment>
<comment type="subcellular location">
    <subcellularLocation>
        <location evidence="1">Cytoplasm</location>
    </subcellularLocation>
</comment>
<comment type="similarity">
    <text evidence="1">Belongs to the HCP family.</text>
</comment>
<evidence type="ECO:0000255" key="1">
    <source>
        <dbReference type="HAMAP-Rule" id="MF_00069"/>
    </source>
</evidence>
<name>HCP_PHOPO</name>
<reference key="1">
    <citation type="journal article" date="2002" name="Eur. J. Biochem.">
        <title>Stimulated biosynthesis of flavins in Photobacterium phosphoreum IFO 13896 and the presence of complete rib operons in two species of luminous bacteria.</title>
        <authorList>
            <person name="Kasai S."/>
            <person name="Sumimoto T."/>
        </authorList>
    </citation>
    <scope>NUCLEOTIDE SEQUENCE [GENOMIC DNA]</scope>
    <source>
        <strain>NBRC 13896 / KCTC 2852 / 54</strain>
    </source>
</reference>
<sequence length="553" mass="60983">MFCIQCEQTLEAPKKKGCAYATGMCGKTAEISDLQDVLVYILQGVSYWADLAHKFDIIDDEINHWAPRAFFATLTNVNFDRERILALANLAENYKTRLKQAVIAATTLAQQPLPTLPTVAEFTLPNTIDAILTLAPQVAVNRGYETINEDVIGLRLLCLYGLKGAAAYMEHARVLGQTNNAIYAQYHHIMSWLGTDPTDLNALLECSMEIGLMNYKVMEMLDLGETNTFGHPLPSQVNVKPIQGKCILVSGHDLHDLEKILQQTEGKHINVYTNGEMLPAHSYPELKKYPHLVGNYGSAWQNQQLEFANFPGAIVMTSNCLINPNVGKYADRIFTRSIVAWPGVAHIEGDDFSQVIDCALALDGFQHTEIEHMITIGFGRNALMNAAPAVIDQVKQGNINHFFLVGGCDGAKEERSYFTDFAAQVPQDSLILTLACGKYRFNKNNFGDINGIPRLLDVGQCNDAYSAIQLALALANEFDCSINELPLTLVLSWFEQKAIVILLTLFALGVKGIYTGPTAPAFLTDNLLAIIAEKFDMRSISTPEADLNTILSA</sequence>
<feature type="chain" id="PRO_0000151678" description="Hydroxylamine reductase">
    <location>
        <begin position="1"/>
        <end position="553"/>
    </location>
</feature>
<feature type="binding site" evidence="1">
    <location>
        <position position="3"/>
    </location>
    <ligand>
        <name>[2Fe-2S] cluster</name>
        <dbReference type="ChEBI" id="CHEBI:190135"/>
    </ligand>
</feature>
<feature type="binding site" evidence="1">
    <location>
        <position position="6"/>
    </location>
    <ligand>
        <name>[2Fe-2S] cluster</name>
        <dbReference type="ChEBI" id="CHEBI:190135"/>
    </ligand>
</feature>
<feature type="binding site" evidence="1">
    <location>
        <position position="18"/>
    </location>
    <ligand>
        <name>[2Fe-2S] cluster</name>
        <dbReference type="ChEBI" id="CHEBI:190135"/>
    </ligand>
</feature>
<feature type="binding site" evidence="1">
    <location>
        <position position="25"/>
    </location>
    <ligand>
        <name>[2Fe-2S] cluster</name>
        <dbReference type="ChEBI" id="CHEBI:190135"/>
    </ligand>
</feature>
<feature type="binding site" evidence="1">
    <location>
        <position position="252"/>
    </location>
    <ligand>
        <name>hybrid [4Fe-2O-2S] cluster</name>
        <dbReference type="ChEBI" id="CHEBI:60519"/>
    </ligand>
</feature>
<feature type="binding site" evidence="1">
    <location>
        <position position="276"/>
    </location>
    <ligand>
        <name>hybrid [4Fe-2O-2S] cluster</name>
        <dbReference type="ChEBI" id="CHEBI:60519"/>
    </ligand>
</feature>
<feature type="binding site" evidence="1">
    <location>
        <position position="320"/>
    </location>
    <ligand>
        <name>hybrid [4Fe-2O-2S] cluster</name>
        <dbReference type="ChEBI" id="CHEBI:60519"/>
    </ligand>
</feature>
<feature type="binding site" description="via persulfide group" evidence="1">
    <location>
        <position position="408"/>
    </location>
    <ligand>
        <name>hybrid [4Fe-2O-2S] cluster</name>
        <dbReference type="ChEBI" id="CHEBI:60519"/>
    </ligand>
</feature>
<feature type="binding site" evidence="1">
    <location>
        <position position="436"/>
    </location>
    <ligand>
        <name>hybrid [4Fe-2O-2S] cluster</name>
        <dbReference type="ChEBI" id="CHEBI:60519"/>
    </ligand>
</feature>
<feature type="binding site" evidence="1">
    <location>
        <position position="461"/>
    </location>
    <ligand>
        <name>hybrid [4Fe-2O-2S] cluster</name>
        <dbReference type="ChEBI" id="CHEBI:60519"/>
    </ligand>
</feature>
<feature type="binding site" evidence="1">
    <location>
        <position position="495"/>
    </location>
    <ligand>
        <name>hybrid [4Fe-2O-2S] cluster</name>
        <dbReference type="ChEBI" id="CHEBI:60519"/>
    </ligand>
</feature>
<feature type="binding site" evidence="1">
    <location>
        <position position="497"/>
    </location>
    <ligand>
        <name>hybrid [4Fe-2O-2S] cluster</name>
        <dbReference type="ChEBI" id="CHEBI:60519"/>
    </ligand>
</feature>
<feature type="modified residue" description="Cysteine persulfide" evidence="1">
    <location>
        <position position="408"/>
    </location>
</feature>
<proteinExistence type="inferred from homology"/>
<dbReference type="EC" id="1.7.99.1" evidence="1"/>
<dbReference type="EMBL" id="AB065117">
    <property type="protein sequence ID" value="BAC44846.1"/>
    <property type="molecule type" value="Genomic_DNA"/>
</dbReference>
<dbReference type="RefSeq" id="WP_036792167.1">
    <property type="nucleotide sequence ID" value="NZ_LN794353.1"/>
</dbReference>
<dbReference type="SMR" id="Q8G969"/>
<dbReference type="STRING" id="659.AYY26_10945"/>
<dbReference type="GeneID" id="29945763"/>
<dbReference type="GO" id="GO:0005737">
    <property type="term" value="C:cytoplasm"/>
    <property type="evidence" value="ECO:0007669"/>
    <property type="project" value="UniProtKB-SubCell"/>
</dbReference>
<dbReference type="GO" id="GO:0051537">
    <property type="term" value="F:2 iron, 2 sulfur cluster binding"/>
    <property type="evidence" value="ECO:0007669"/>
    <property type="project" value="UniProtKB-KW"/>
</dbReference>
<dbReference type="GO" id="GO:0050418">
    <property type="term" value="F:hydroxylamine reductase activity"/>
    <property type="evidence" value="ECO:0007669"/>
    <property type="project" value="UniProtKB-UniRule"/>
</dbReference>
<dbReference type="GO" id="GO:0046872">
    <property type="term" value="F:metal ion binding"/>
    <property type="evidence" value="ECO:0007669"/>
    <property type="project" value="UniProtKB-KW"/>
</dbReference>
<dbReference type="GO" id="GO:0004601">
    <property type="term" value="F:peroxidase activity"/>
    <property type="evidence" value="ECO:0007669"/>
    <property type="project" value="TreeGrafter"/>
</dbReference>
<dbReference type="GO" id="GO:0042542">
    <property type="term" value="P:response to hydrogen peroxide"/>
    <property type="evidence" value="ECO:0007669"/>
    <property type="project" value="TreeGrafter"/>
</dbReference>
<dbReference type="CDD" id="cd01914">
    <property type="entry name" value="HCP"/>
    <property type="match status" value="1"/>
</dbReference>
<dbReference type="FunFam" id="1.20.1270.20:FF:000001">
    <property type="entry name" value="Hydroxylamine reductase"/>
    <property type="match status" value="1"/>
</dbReference>
<dbReference type="FunFam" id="3.40.50.2030:FF:000001">
    <property type="entry name" value="Hydroxylamine reductase"/>
    <property type="match status" value="1"/>
</dbReference>
<dbReference type="FunFam" id="3.40.50.2030:FF:000002">
    <property type="entry name" value="Hydroxylamine reductase"/>
    <property type="match status" value="1"/>
</dbReference>
<dbReference type="Gene3D" id="1.20.1270.20">
    <property type="match status" value="2"/>
</dbReference>
<dbReference type="Gene3D" id="3.40.50.2030">
    <property type="match status" value="2"/>
</dbReference>
<dbReference type="HAMAP" id="MF_00069">
    <property type="entry name" value="Hydroxylam_reduct"/>
    <property type="match status" value="1"/>
</dbReference>
<dbReference type="InterPro" id="IPR004137">
    <property type="entry name" value="HCP/CODH"/>
</dbReference>
<dbReference type="InterPro" id="IPR010048">
    <property type="entry name" value="Hydroxylam_reduct"/>
</dbReference>
<dbReference type="InterPro" id="IPR016099">
    <property type="entry name" value="Prismane-like_a/b-sand"/>
</dbReference>
<dbReference type="InterPro" id="IPR011254">
    <property type="entry name" value="Prismane-like_sf"/>
</dbReference>
<dbReference type="InterPro" id="IPR016100">
    <property type="entry name" value="Prismane_a-bundle"/>
</dbReference>
<dbReference type="NCBIfam" id="TIGR01703">
    <property type="entry name" value="hybrid_clust"/>
    <property type="match status" value="1"/>
</dbReference>
<dbReference type="NCBIfam" id="NF003658">
    <property type="entry name" value="PRK05290.1"/>
    <property type="match status" value="1"/>
</dbReference>
<dbReference type="PANTHER" id="PTHR30109">
    <property type="entry name" value="HYDROXYLAMINE REDUCTASE"/>
    <property type="match status" value="1"/>
</dbReference>
<dbReference type="PANTHER" id="PTHR30109:SF0">
    <property type="entry name" value="HYDROXYLAMINE REDUCTASE"/>
    <property type="match status" value="1"/>
</dbReference>
<dbReference type="Pfam" id="PF03063">
    <property type="entry name" value="Prismane"/>
    <property type="match status" value="1"/>
</dbReference>
<dbReference type="PIRSF" id="PIRSF000076">
    <property type="entry name" value="HCP"/>
    <property type="match status" value="1"/>
</dbReference>
<dbReference type="SUPFAM" id="SSF56821">
    <property type="entry name" value="Prismane protein-like"/>
    <property type="match status" value="1"/>
</dbReference>
<keyword id="KW-0001">2Fe-2S</keyword>
<keyword id="KW-0963">Cytoplasm</keyword>
<keyword id="KW-0408">Iron</keyword>
<keyword id="KW-0411">Iron-sulfur</keyword>
<keyword id="KW-0479">Metal-binding</keyword>
<keyword id="KW-0560">Oxidoreductase</keyword>
<gene>
    <name evidence="1" type="primary">hcp</name>
</gene>